<name>RL23_LATSS</name>
<dbReference type="EMBL" id="CR936503">
    <property type="protein sequence ID" value="CAI56070.1"/>
    <property type="molecule type" value="Genomic_DNA"/>
</dbReference>
<dbReference type="RefSeq" id="WP_011375447.1">
    <property type="nucleotide sequence ID" value="NC_007576.1"/>
</dbReference>
<dbReference type="SMR" id="Q38UR4"/>
<dbReference type="STRING" id="314315.LCA_1762"/>
<dbReference type="GeneID" id="57132679"/>
<dbReference type="KEGG" id="lsa:LCA_1762"/>
<dbReference type="eggNOG" id="COG0089">
    <property type="taxonomic scope" value="Bacteria"/>
</dbReference>
<dbReference type="HOGENOM" id="CLU_037562_3_2_9"/>
<dbReference type="OrthoDB" id="9793353at2"/>
<dbReference type="Proteomes" id="UP000002707">
    <property type="component" value="Chromosome"/>
</dbReference>
<dbReference type="GO" id="GO:1990904">
    <property type="term" value="C:ribonucleoprotein complex"/>
    <property type="evidence" value="ECO:0007669"/>
    <property type="project" value="UniProtKB-KW"/>
</dbReference>
<dbReference type="GO" id="GO:0005840">
    <property type="term" value="C:ribosome"/>
    <property type="evidence" value="ECO:0007669"/>
    <property type="project" value="UniProtKB-KW"/>
</dbReference>
<dbReference type="GO" id="GO:0019843">
    <property type="term" value="F:rRNA binding"/>
    <property type="evidence" value="ECO:0007669"/>
    <property type="project" value="UniProtKB-UniRule"/>
</dbReference>
<dbReference type="GO" id="GO:0003735">
    <property type="term" value="F:structural constituent of ribosome"/>
    <property type="evidence" value="ECO:0007669"/>
    <property type="project" value="InterPro"/>
</dbReference>
<dbReference type="GO" id="GO:0006412">
    <property type="term" value="P:translation"/>
    <property type="evidence" value="ECO:0007669"/>
    <property type="project" value="UniProtKB-UniRule"/>
</dbReference>
<dbReference type="FunFam" id="3.30.70.330:FF:000001">
    <property type="entry name" value="50S ribosomal protein L23"/>
    <property type="match status" value="1"/>
</dbReference>
<dbReference type="Gene3D" id="3.30.70.330">
    <property type="match status" value="1"/>
</dbReference>
<dbReference type="HAMAP" id="MF_01369_B">
    <property type="entry name" value="Ribosomal_uL23_B"/>
    <property type="match status" value="1"/>
</dbReference>
<dbReference type="InterPro" id="IPR012677">
    <property type="entry name" value="Nucleotide-bd_a/b_plait_sf"/>
</dbReference>
<dbReference type="InterPro" id="IPR013025">
    <property type="entry name" value="Ribosomal_uL23-like"/>
</dbReference>
<dbReference type="InterPro" id="IPR012678">
    <property type="entry name" value="Ribosomal_uL23/eL15/eS24_sf"/>
</dbReference>
<dbReference type="InterPro" id="IPR001014">
    <property type="entry name" value="Ribosomal_uL23_CS"/>
</dbReference>
<dbReference type="NCBIfam" id="NF004363">
    <property type="entry name" value="PRK05738.2-4"/>
    <property type="match status" value="1"/>
</dbReference>
<dbReference type="PANTHER" id="PTHR11620">
    <property type="entry name" value="60S RIBOSOMAL PROTEIN L23A"/>
    <property type="match status" value="1"/>
</dbReference>
<dbReference type="Pfam" id="PF00276">
    <property type="entry name" value="Ribosomal_L23"/>
    <property type="match status" value="1"/>
</dbReference>
<dbReference type="SUPFAM" id="SSF54189">
    <property type="entry name" value="Ribosomal proteins S24e, L23 and L15e"/>
    <property type="match status" value="1"/>
</dbReference>
<dbReference type="PROSITE" id="PS00050">
    <property type="entry name" value="RIBOSOMAL_L23"/>
    <property type="match status" value="1"/>
</dbReference>
<sequence length="94" mass="10844">MEARDVILRPVVTESSMAAMDDKKYTFDVDVRANKTQVRYAIEEIFGVNVKNVNIMNVRGKLKRQGRYAGYTKKRRKAIVTLTADSKEIKIFED</sequence>
<keyword id="KW-1185">Reference proteome</keyword>
<keyword id="KW-0687">Ribonucleoprotein</keyword>
<keyword id="KW-0689">Ribosomal protein</keyword>
<keyword id="KW-0694">RNA-binding</keyword>
<keyword id="KW-0699">rRNA-binding</keyword>
<protein>
    <recommendedName>
        <fullName evidence="1">Large ribosomal subunit protein uL23</fullName>
    </recommendedName>
    <alternativeName>
        <fullName evidence="2">50S ribosomal protein L23</fullName>
    </alternativeName>
</protein>
<proteinExistence type="inferred from homology"/>
<comment type="function">
    <text evidence="1">One of the early assembly proteins it binds 23S rRNA. One of the proteins that surrounds the polypeptide exit tunnel on the outside of the ribosome. Forms the main docking site for trigger factor binding to the ribosome.</text>
</comment>
<comment type="subunit">
    <text evidence="1">Part of the 50S ribosomal subunit. Contacts protein L29, and trigger factor when it is bound to the ribosome.</text>
</comment>
<comment type="similarity">
    <text evidence="1">Belongs to the universal ribosomal protein uL23 family.</text>
</comment>
<reference key="1">
    <citation type="journal article" date="2005" name="Nat. Biotechnol.">
        <title>The complete genome sequence of the meat-borne lactic acid bacterium Lactobacillus sakei 23K.</title>
        <authorList>
            <person name="Chaillou S."/>
            <person name="Champomier-Verges M.-C."/>
            <person name="Cornet M."/>
            <person name="Crutz-Le Coq A.-M."/>
            <person name="Dudez A.-M."/>
            <person name="Martin V."/>
            <person name="Beaufils S."/>
            <person name="Darbon-Rongere E."/>
            <person name="Bossy R."/>
            <person name="Loux V."/>
            <person name="Zagorec M."/>
        </authorList>
    </citation>
    <scope>NUCLEOTIDE SEQUENCE [LARGE SCALE GENOMIC DNA]</scope>
    <source>
        <strain>23K</strain>
    </source>
</reference>
<evidence type="ECO:0000255" key="1">
    <source>
        <dbReference type="HAMAP-Rule" id="MF_01369"/>
    </source>
</evidence>
<evidence type="ECO:0000305" key="2"/>
<organism>
    <name type="scientific">Latilactobacillus sakei subsp. sakei (strain 23K)</name>
    <name type="common">Lactobacillus sakei subsp. sakei</name>
    <dbReference type="NCBI Taxonomy" id="314315"/>
    <lineage>
        <taxon>Bacteria</taxon>
        <taxon>Bacillati</taxon>
        <taxon>Bacillota</taxon>
        <taxon>Bacilli</taxon>
        <taxon>Lactobacillales</taxon>
        <taxon>Lactobacillaceae</taxon>
        <taxon>Latilactobacillus</taxon>
    </lineage>
</organism>
<gene>
    <name evidence="1" type="primary">rplW</name>
    <name type="ordered locus">LCA_1762</name>
</gene>
<accession>Q38UR4</accession>
<feature type="chain" id="PRO_1000068097" description="Large ribosomal subunit protein uL23">
    <location>
        <begin position="1"/>
        <end position="94"/>
    </location>
</feature>